<reference key="1">
    <citation type="journal article" date="2009" name="PLoS Genet.">
        <title>Organised genome dynamics in the Escherichia coli species results in highly diverse adaptive paths.</title>
        <authorList>
            <person name="Touchon M."/>
            <person name="Hoede C."/>
            <person name="Tenaillon O."/>
            <person name="Barbe V."/>
            <person name="Baeriswyl S."/>
            <person name="Bidet P."/>
            <person name="Bingen E."/>
            <person name="Bonacorsi S."/>
            <person name="Bouchier C."/>
            <person name="Bouvet O."/>
            <person name="Calteau A."/>
            <person name="Chiapello H."/>
            <person name="Clermont O."/>
            <person name="Cruveiller S."/>
            <person name="Danchin A."/>
            <person name="Diard M."/>
            <person name="Dossat C."/>
            <person name="Karoui M.E."/>
            <person name="Frapy E."/>
            <person name="Garry L."/>
            <person name="Ghigo J.M."/>
            <person name="Gilles A.M."/>
            <person name="Johnson J."/>
            <person name="Le Bouguenec C."/>
            <person name="Lescat M."/>
            <person name="Mangenot S."/>
            <person name="Martinez-Jehanne V."/>
            <person name="Matic I."/>
            <person name="Nassif X."/>
            <person name="Oztas S."/>
            <person name="Petit M.A."/>
            <person name="Pichon C."/>
            <person name="Rouy Z."/>
            <person name="Ruf C.S."/>
            <person name="Schneider D."/>
            <person name="Tourret J."/>
            <person name="Vacherie B."/>
            <person name="Vallenet D."/>
            <person name="Medigue C."/>
            <person name="Rocha E.P.C."/>
            <person name="Denamur E."/>
        </authorList>
    </citation>
    <scope>NUCLEOTIDE SEQUENCE [LARGE SCALE GENOMIC DNA]</scope>
    <source>
        <strain>IAI39 / ExPEC</strain>
    </source>
</reference>
<accession>B7NRJ0</accession>
<feature type="chain" id="PRO_1000186965" description="3-phenylpropionate-dihydrodiol/cinnamic acid-dihydrodiol dehydrogenase">
    <location>
        <begin position="1"/>
        <end position="270"/>
    </location>
</feature>
<feature type="active site" description="Proton acceptor" evidence="1">
    <location>
        <position position="156"/>
    </location>
</feature>
<feature type="binding site" evidence="1">
    <location>
        <begin position="10"/>
        <end position="34"/>
    </location>
    <ligand>
        <name>NAD(+)</name>
        <dbReference type="ChEBI" id="CHEBI:57540"/>
    </ligand>
</feature>
<feature type="binding site" evidence="1">
    <location>
        <position position="143"/>
    </location>
    <ligand>
        <name>substrate</name>
    </ligand>
</feature>
<keyword id="KW-0058">Aromatic hydrocarbons catabolism</keyword>
<keyword id="KW-0520">NAD</keyword>
<keyword id="KW-0560">Oxidoreductase</keyword>
<gene>
    <name evidence="1" type="primary">hcaB</name>
    <name type="ordered locus">ECIAI39_2742</name>
</gene>
<organism>
    <name type="scientific">Escherichia coli O7:K1 (strain IAI39 / ExPEC)</name>
    <dbReference type="NCBI Taxonomy" id="585057"/>
    <lineage>
        <taxon>Bacteria</taxon>
        <taxon>Pseudomonadati</taxon>
        <taxon>Pseudomonadota</taxon>
        <taxon>Gammaproteobacteria</taxon>
        <taxon>Enterobacterales</taxon>
        <taxon>Enterobacteriaceae</taxon>
        <taxon>Escherichia</taxon>
    </lineage>
</organism>
<dbReference type="EC" id="1.3.1.87" evidence="1"/>
<dbReference type="EMBL" id="CU928164">
    <property type="protein sequence ID" value="CAR18864.1"/>
    <property type="molecule type" value="Genomic_DNA"/>
</dbReference>
<dbReference type="RefSeq" id="WP_001281369.1">
    <property type="nucleotide sequence ID" value="NC_011750.1"/>
</dbReference>
<dbReference type="RefSeq" id="YP_002408680.1">
    <property type="nucleotide sequence ID" value="NC_011750.1"/>
</dbReference>
<dbReference type="SMR" id="B7NRJ0"/>
<dbReference type="STRING" id="585057.ECIAI39_2742"/>
<dbReference type="KEGG" id="ect:ECIAI39_2742"/>
<dbReference type="PATRIC" id="fig|585057.6.peg.2851"/>
<dbReference type="HOGENOM" id="CLU_010194_1_0_6"/>
<dbReference type="UniPathway" id="UPA00714"/>
<dbReference type="Proteomes" id="UP000000749">
    <property type="component" value="Chromosome"/>
</dbReference>
<dbReference type="GO" id="GO:0018498">
    <property type="term" value="F:2,3-dihydroxy-2,3-dihydro-phenylpropionate dehydrogenase activity"/>
    <property type="evidence" value="ECO:0007669"/>
    <property type="project" value="UniProtKB-UniRule"/>
</dbReference>
<dbReference type="GO" id="GO:0019380">
    <property type="term" value="P:3-phenylpropionate catabolic process"/>
    <property type="evidence" value="ECO:0007669"/>
    <property type="project" value="UniProtKB-UniRule"/>
</dbReference>
<dbReference type="CDD" id="cd05348">
    <property type="entry name" value="BphB-like_SDR_c"/>
    <property type="match status" value="1"/>
</dbReference>
<dbReference type="FunFam" id="3.40.50.720:FF:000151">
    <property type="entry name" value="3-phenylpropionate-dihydrodiol/cinnamic acid-dihydrodiol dehydrogenase"/>
    <property type="match status" value="1"/>
</dbReference>
<dbReference type="Gene3D" id="3.40.50.720">
    <property type="entry name" value="NAD(P)-binding Rossmann-like Domain"/>
    <property type="match status" value="1"/>
</dbReference>
<dbReference type="HAMAP" id="MF_01647">
    <property type="entry name" value="HcaB"/>
    <property type="match status" value="1"/>
</dbReference>
<dbReference type="InterPro" id="IPR047950">
    <property type="entry name" value="BphB-like_SDR"/>
</dbReference>
<dbReference type="InterPro" id="IPR023643">
    <property type="entry name" value="Dihydrodiol_DH_HcaB"/>
</dbReference>
<dbReference type="InterPro" id="IPR036291">
    <property type="entry name" value="NAD(P)-bd_dom_sf"/>
</dbReference>
<dbReference type="InterPro" id="IPR020904">
    <property type="entry name" value="Sc_DH/Rdtase_CS"/>
</dbReference>
<dbReference type="InterPro" id="IPR002347">
    <property type="entry name" value="SDR_fam"/>
</dbReference>
<dbReference type="NCBIfam" id="NF042950">
    <property type="entry name" value="3PPDhyd_Dh_HcaB"/>
    <property type="match status" value="1"/>
</dbReference>
<dbReference type="NCBIfam" id="NF004849">
    <property type="entry name" value="PRK06200.1"/>
    <property type="match status" value="1"/>
</dbReference>
<dbReference type="PANTHER" id="PTHR43943:SF17">
    <property type="entry name" value="3-PHENYLPROPIONATE-DIHYDRODIOL_CINNAMIC ACID-DIHYDRODIOL DEHYDROGENASE"/>
    <property type="match status" value="1"/>
</dbReference>
<dbReference type="PANTHER" id="PTHR43943">
    <property type="entry name" value="DEHYDROGENASE/REDUCTASE (SDR FAMILY) MEMBER 4"/>
    <property type="match status" value="1"/>
</dbReference>
<dbReference type="Pfam" id="PF00106">
    <property type="entry name" value="adh_short"/>
    <property type="match status" value="1"/>
</dbReference>
<dbReference type="PRINTS" id="PR00081">
    <property type="entry name" value="GDHRDH"/>
</dbReference>
<dbReference type="PRINTS" id="PR00080">
    <property type="entry name" value="SDRFAMILY"/>
</dbReference>
<dbReference type="SUPFAM" id="SSF51735">
    <property type="entry name" value="NAD(P)-binding Rossmann-fold domains"/>
    <property type="match status" value="1"/>
</dbReference>
<dbReference type="PROSITE" id="PS00061">
    <property type="entry name" value="ADH_SHORT"/>
    <property type="match status" value="1"/>
</dbReference>
<sequence length="270" mass="28514">MSDLHNESIFITGGGSGLGLALVERFIEEGAQVATLELSAAKVASLRQRFGEHILAVEGNVTCYADYQRALDQILTRSGKLDCFIGNAGIWDHNASLVNTPAETLETGFHELFNVNVLGYLLSAKACAPALIASEGSMIFTLSNAAWYPGGGGPLYTASKHAATGLIRQLAYELAPKVRVNGVGPCGMASDLRGPQALGQSETSIMQSLTPEKIAAILPLQFFPQPADFTGPYVMLASRRNNRALSGVMINADAGLAIRGIRHVAAGLDL</sequence>
<proteinExistence type="inferred from homology"/>
<name>HCAB_ECO7I</name>
<protein>
    <recommendedName>
        <fullName evidence="1">3-phenylpropionate-dihydrodiol/cinnamic acid-dihydrodiol dehydrogenase</fullName>
        <ecNumber evidence="1">1.3.1.87</ecNumber>
    </recommendedName>
    <alternativeName>
        <fullName evidence="1">2,3-dihydroxy-2,3-dihydrophenylpropionate dehydrogenase</fullName>
    </alternativeName>
    <alternativeName>
        <fullName evidence="1">3-(cis-5,6-dihydroxycyclohexa-1,3-dien-1-yl)propanoate dehydrogenase</fullName>
    </alternativeName>
    <alternativeName>
        <fullName evidence="1">CI-dihydrodiol dehydrogenase</fullName>
    </alternativeName>
    <alternativeName>
        <fullName evidence="1">Cis-3-(2-carboxyethenyl)-3,5-cyclohexadiene-1,2-diol dehydrogenase</fullName>
    </alternativeName>
    <alternativeName>
        <fullName evidence="1">Cis-3-(2-carboxyethyl)-3,5-cyclohexadiene-1,2-diol dehydrogenase</fullName>
    </alternativeName>
    <alternativeName>
        <fullName evidence="1">PP-dihydrodiol dehydrogenase</fullName>
    </alternativeName>
</protein>
<evidence type="ECO:0000255" key="1">
    <source>
        <dbReference type="HAMAP-Rule" id="MF_01647"/>
    </source>
</evidence>
<comment type="function">
    <text evidence="1">Converts 3-phenylpropionate-dihydrodiol (PP-dihydrodiol) and cinnamic acid-dihydrodiol (CI-dihydrodiol) into 3-(2,3-dihydroxylphenyl)propanoic acid (DHPP) and 2,3-dihydroxicinnamic acid (DHCI), respectively.</text>
</comment>
<comment type="catalytic activity">
    <reaction evidence="1">
        <text>3-(cis-5,6-dihydroxycyclohexa-1,3-dien-1-yl)propanoate + NAD(+) = 3-(2,3-dihydroxyphenyl)propanoate + NADH + H(+)</text>
        <dbReference type="Rhea" id="RHEA:25062"/>
        <dbReference type="ChEBI" id="CHEBI:15378"/>
        <dbReference type="ChEBI" id="CHEBI:46951"/>
        <dbReference type="ChEBI" id="CHEBI:57540"/>
        <dbReference type="ChEBI" id="CHEBI:57945"/>
        <dbReference type="ChEBI" id="CHEBI:60087"/>
        <dbReference type="EC" id="1.3.1.87"/>
    </reaction>
</comment>
<comment type="catalytic activity">
    <reaction evidence="1">
        <text>(2E)-3-(cis-5,6-dihydroxycyclohexa-1,3-dien-1-yl)prop-2-enoate + NAD(+) = (2E)-3-(2,3-dihydroxyphenyl)prop-2-enoate + NADH + H(+)</text>
        <dbReference type="Rhea" id="RHEA:25066"/>
        <dbReference type="ChEBI" id="CHEBI:15378"/>
        <dbReference type="ChEBI" id="CHEBI:57540"/>
        <dbReference type="ChEBI" id="CHEBI:57945"/>
        <dbReference type="ChEBI" id="CHEBI:58642"/>
        <dbReference type="ChEBI" id="CHEBI:61451"/>
        <dbReference type="EC" id="1.3.1.87"/>
    </reaction>
</comment>
<comment type="pathway">
    <text evidence="1">Aromatic compound metabolism; 3-phenylpropanoate degradation.</text>
</comment>
<comment type="similarity">
    <text evidence="1">Belongs to the short-chain dehydrogenases/reductases (SDR) family.</text>
</comment>